<proteinExistence type="inferred from homology"/>
<protein>
    <recommendedName>
        <fullName evidence="1">Putative competence-damage inducible protein</fullName>
    </recommendedName>
</protein>
<evidence type="ECO:0000255" key="1">
    <source>
        <dbReference type="HAMAP-Rule" id="MF_00226"/>
    </source>
</evidence>
<name>CINA_STRPI</name>
<organism>
    <name type="scientific">Streptococcus pneumoniae (strain Hungary19A-6)</name>
    <dbReference type="NCBI Taxonomy" id="487214"/>
    <lineage>
        <taxon>Bacteria</taxon>
        <taxon>Bacillati</taxon>
        <taxon>Bacillota</taxon>
        <taxon>Bacilli</taxon>
        <taxon>Lactobacillales</taxon>
        <taxon>Streptococcaceae</taxon>
        <taxon>Streptococcus</taxon>
    </lineage>
</organism>
<dbReference type="EMBL" id="CP000936">
    <property type="protein sequence ID" value="ACA35620.1"/>
    <property type="molecule type" value="Genomic_DNA"/>
</dbReference>
<dbReference type="RefSeq" id="WP_000642704.1">
    <property type="nucleotide sequence ID" value="NC_010380.1"/>
</dbReference>
<dbReference type="SMR" id="B1I8Q2"/>
<dbReference type="KEGG" id="spv:SPH_2090"/>
<dbReference type="HOGENOM" id="CLU_030805_9_3_9"/>
<dbReference type="Proteomes" id="UP000002163">
    <property type="component" value="Chromosome"/>
</dbReference>
<dbReference type="CDD" id="cd00885">
    <property type="entry name" value="cinA"/>
    <property type="match status" value="1"/>
</dbReference>
<dbReference type="Gene3D" id="3.30.70.2860">
    <property type="match status" value="1"/>
</dbReference>
<dbReference type="Gene3D" id="3.90.950.20">
    <property type="entry name" value="CinA-like"/>
    <property type="match status" value="1"/>
</dbReference>
<dbReference type="Gene3D" id="3.40.980.10">
    <property type="entry name" value="MoaB/Mog-like domain"/>
    <property type="match status" value="1"/>
</dbReference>
<dbReference type="HAMAP" id="MF_00226_B">
    <property type="entry name" value="CinA_B"/>
    <property type="match status" value="1"/>
</dbReference>
<dbReference type="InterPro" id="IPR050101">
    <property type="entry name" value="CinA"/>
</dbReference>
<dbReference type="InterPro" id="IPR036653">
    <property type="entry name" value="CinA-like_C"/>
</dbReference>
<dbReference type="InterPro" id="IPR008136">
    <property type="entry name" value="CinA_C"/>
</dbReference>
<dbReference type="InterPro" id="IPR041424">
    <property type="entry name" value="CinA_KH"/>
</dbReference>
<dbReference type="InterPro" id="IPR008135">
    <property type="entry name" value="Competence-induced_CinA"/>
</dbReference>
<dbReference type="InterPro" id="IPR036425">
    <property type="entry name" value="MoaB/Mog-like_dom_sf"/>
</dbReference>
<dbReference type="InterPro" id="IPR001453">
    <property type="entry name" value="MoaB/Mog_dom"/>
</dbReference>
<dbReference type="NCBIfam" id="TIGR00200">
    <property type="entry name" value="cinA_nterm"/>
    <property type="match status" value="1"/>
</dbReference>
<dbReference type="NCBIfam" id="TIGR00199">
    <property type="entry name" value="PncC_domain"/>
    <property type="match status" value="1"/>
</dbReference>
<dbReference type="NCBIfam" id="NF001813">
    <property type="entry name" value="PRK00549.1"/>
    <property type="match status" value="1"/>
</dbReference>
<dbReference type="PANTHER" id="PTHR13939">
    <property type="entry name" value="NICOTINAMIDE-NUCLEOTIDE AMIDOHYDROLASE PNCC"/>
    <property type="match status" value="1"/>
</dbReference>
<dbReference type="PANTHER" id="PTHR13939:SF0">
    <property type="entry name" value="NMN AMIDOHYDROLASE-LIKE PROTEIN YFAY"/>
    <property type="match status" value="1"/>
</dbReference>
<dbReference type="Pfam" id="PF02464">
    <property type="entry name" value="CinA"/>
    <property type="match status" value="1"/>
</dbReference>
<dbReference type="Pfam" id="PF18146">
    <property type="entry name" value="CinA_KH"/>
    <property type="match status" value="1"/>
</dbReference>
<dbReference type="Pfam" id="PF00994">
    <property type="entry name" value="MoCF_biosynth"/>
    <property type="match status" value="1"/>
</dbReference>
<dbReference type="PIRSF" id="PIRSF006728">
    <property type="entry name" value="CinA"/>
    <property type="match status" value="1"/>
</dbReference>
<dbReference type="SMART" id="SM00852">
    <property type="entry name" value="MoCF_biosynth"/>
    <property type="match status" value="1"/>
</dbReference>
<dbReference type="SUPFAM" id="SSF142433">
    <property type="entry name" value="CinA-like"/>
    <property type="match status" value="1"/>
</dbReference>
<dbReference type="SUPFAM" id="SSF53218">
    <property type="entry name" value="Molybdenum cofactor biosynthesis proteins"/>
    <property type="match status" value="1"/>
</dbReference>
<comment type="similarity">
    <text evidence="1">Belongs to the CinA family.</text>
</comment>
<sequence length="418" mass="45089">MKAEIIAVGTEILTGQIVNTNAQFLSEKLAEIGVDVYFQTAVGDNEVRLLSLLEIASQRSSLVILTGGLGPTEDDLTKQTLAKFLGKALVFDPQAQEKLDIFFALRPDYARTPNNERQAQIVEGAIPLPNETGLAVGGKLEVDGVTYVVLPGPPSELKPMVLNQLLPKLMTGNKLYSRVLRFFGIGESQLVTILADLIDNQIDPTLAPYAKTGEVTLRLSTKASSQEEANQALDILENQILDCQTFEGISLRDFCYGYGEETSLASIVVEELKRQGKTIAAAESLTAGLFQATVANFSGVSSIFEGGFVTYSLEEKSRMLDIPAKNLEEHGVVSEFTAQKMAEQARSKTQSDFGISLTGVAGPDSLEGHPVGTVFIGLAQDQGTEVIKVNIGGRSRADVRHIAVMHAFNLVRKALLSD</sequence>
<accession>B1I8Q2</accession>
<feature type="chain" id="PRO_1000100336" description="Putative competence-damage inducible protein">
    <location>
        <begin position="1"/>
        <end position="418"/>
    </location>
</feature>
<gene>
    <name evidence="1" type="primary">cinA</name>
    <name type="ordered locus">SPH_2090</name>
</gene>
<reference key="1">
    <citation type="journal article" date="2010" name="Genome Biol.">
        <title>Structure and dynamics of the pan-genome of Streptococcus pneumoniae and closely related species.</title>
        <authorList>
            <person name="Donati C."/>
            <person name="Hiller N.L."/>
            <person name="Tettelin H."/>
            <person name="Muzzi A."/>
            <person name="Croucher N.J."/>
            <person name="Angiuoli S.V."/>
            <person name="Oggioni M."/>
            <person name="Dunning Hotopp J.C."/>
            <person name="Hu F.Z."/>
            <person name="Riley D.R."/>
            <person name="Covacci A."/>
            <person name="Mitchell T.J."/>
            <person name="Bentley S.D."/>
            <person name="Kilian M."/>
            <person name="Ehrlich G.D."/>
            <person name="Rappuoli R."/>
            <person name="Moxon E.R."/>
            <person name="Masignani V."/>
        </authorList>
    </citation>
    <scope>NUCLEOTIDE SEQUENCE [LARGE SCALE GENOMIC DNA]</scope>
    <source>
        <strain>Hungary19A-6</strain>
    </source>
</reference>